<sequence length="216" mass="23364">MTVQLRVYVPPHPLIKHWLAVARDAATPSVLFRSAITELGRWLTYEAAREWLPTEETTVQTPLEICPATVINPQVPVAVVPILRAGLGLLEGAQTVLPLASIYHLGLVRNEETLEASCYLNKLPEKFDPQTRVLITDPMLATGGSIMKAMSELTERGVDPSLVRIVSVVAAPPALQKLNAAYSGLIVYTATIDETVNDQGFIVPGLGDAGDRIFGT</sequence>
<reference key="1">
    <citation type="journal article" date="2001" name="DNA Res.">
        <title>Complete genomic sequence of the filamentous nitrogen-fixing cyanobacterium Anabaena sp. strain PCC 7120.</title>
        <authorList>
            <person name="Kaneko T."/>
            <person name="Nakamura Y."/>
            <person name="Wolk C.P."/>
            <person name="Kuritz T."/>
            <person name="Sasamoto S."/>
            <person name="Watanabe A."/>
            <person name="Iriguchi M."/>
            <person name="Ishikawa A."/>
            <person name="Kawashima K."/>
            <person name="Kimura T."/>
            <person name="Kishida Y."/>
            <person name="Kohara M."/>
            <person name="Matsumoto M."/>
            <person name="Matsuno A."/>
            <person name="Muraki A."/>
            <person name="Nakazaki N."/>
            <person name="Shimpo S."/>
            <person name="Sugimoto M."/>
            <person name="Takazawa M."/>
            <person name="Yamada M."/>
            <person name="Yasuda M."/>
            <person name="Tabata S."/>
        </authorList>
    </citation>
    <scope>NUCLEOTIDE SEQUENCE [LARGE SCALE GENOMIC DNA]</scope>
    <source>
        <strain>PCC 7120 / SAG 25.82 / UTEX 2576</strain>
    </source>
</reference>
<protein>
    <recommendedName>
        <fullName evidence="1">Uracil phosphoribosyltransferase</fullName>
        <ecNumber evidence="1">2.4.2.9</ecNumber>
    </recommendedName>
    <alternativeName>
        <fullName evidence="1">UMP pyrophosphorylase</fullName>
    </alternativeName>
    <alternativeName>
        <fullName evidence="1">UPRTase</fullName>
    </alternativeName>
</protein>
<keyword id="KW-0021">Allosteric enzyme</keyword>
<keyword id="KW-0328">Glycosyltransferase</keyword>
<keyword id="KW-0342">GTP-binding</keyword>
<keyword id="KW-0460">Magnesium</keyword>
<keyword id="KW-0547">Nucleotide-binding</keyword>
<keyword id="KW-1185">Reference proteome</keyword>
<keyword id="KW-0808">Transferase</keyword>
<organism>
    <name type="scientific">Nostoc sp. (strain PCC 7120 / SAG 25.82 / UTEX 2576)</name>
    <dbReference type="NCBI Taxonomy" id="103690"/>
    <lineage>
        <taxon>Bacteria</taxon>
        <taxon>Bacillati</taxon>
        <taxon>Cyanobacteriota</taxon>
        <taxon>Cyanophyceae</taxon>
        <taxon>Nostocales</taxon>
        <taxon>Nostocaceae</taxon>
        <taxon>Nostoc</taxon>
    </lineage>
</organism>
<name>UPP_NOSS1</name>
<dbReference type="EC" id="2.4.2.9" evidence="1"/>
<dbReference type="EMBL" id="BA000019">
    <property type="protein sequence ID" value="BAB73762.1"/>
    <property type="molecule type" value="Genomic_DNA"/>
</dbReference>
<dbReference type="PIR" id="AI2063">
    <property type="entry name" value="AI2063"/>
</dbReference>
<dbReference type="RefSeq" id="WP_010996224.1">
    <property type="nucleotide sequence ID" value="NZ_RSCN01000001.1"/>
</dbReference>
<dbReference type="SMR" id="Q8YVB5"/>
<dbReference type="STRING" id="103690.gene:10494087"/>
<dbReference type="KEGG" id="ana:all2063"/>
<dbReference type="eggNOG" id="COG0035">
    <property type="taxonomic scope" value="Bacteria"/>
</dbReference>
<dbReference type="OrthoDB" id="9781675at2"/>
<dbReference type="UniPathway" id="UPA00574">
    <property type="reaction ID" value="UER00636"/>
</dbReference>
<dbReference type="Proteomes" id="UP000002483">
    <property type="component" value="Chromosome"/>
</dbReference>
<dbReference type="GO" id="GO:0005525">
    <property type="term" value="F:GTP binding"/>
    <property type="evidence" value="ECO:0007669"/>
    <property type="project" value="UniProtKB-KW"/>
</dbReference>
<dbReference type="GO" id="GO:0000287">
    <property type="term" value="F:magnesium ion binding"/>
    <property type="evidence" value="ECO:0007669"/>
    <property type="project" value="UniProtKB-UniRule"/>
</dbReference>
<dbReference type="GO" id="GO:0004845">
    <property type="term" value="F:uracil phosphoribosyltransferase activity"/>
    <property type="evidence" value="ECO:0007669"/>
    <property type="project" value="UniProtKB-UniRule"/>
</dbReference>
<dbReference type="GO" id="GO:0044206">
    <property type="term" value="P:UMP salvage"/>
    <property type="evidence" value="ECO:0007669"/>
    <property type="project" value="UniProtKB-UniRule"/>
</dbReference>
<dbReference type="GO" id="GO:0006223">
    <property type="term" value="P:uracil salvage"/>
    <property type="evidence" value="ECO:0007669"/>
    <property type="project" value="InterPro"/>
</dbReference>
<dbReference type="CDD" id="cd06223">
    <property type="entry name" value="PRTases_typeI"/>
    <property type="match status" value="1"/>
</dbReference>
<dbReference type="FunFam" id="3.40.50.2020:FF:000003">
    <property type="entry name" value="Uracil phosphoribosyltransferase"/>
    <property type="match status" value="1"/>
</dbReference>
<dbReference type="Gene3D" id="3.40.50.2020">
    <property type="match status" value="1"/>
</dbReference>
<dbReference type="HAMAP" id="MF_01218_B">
    <property type="entry name" value="Upp_B"/>
    <property type="match status" value="1"/>
</dbReference>
<dbReference type="InterPro" id="IPR000836">
    <property type="entry name" value="PRibTrfase_dom"/>
</dbReference>
<dbReference type="InterPro" id="IPR029057">
    <property type="entry name" value="PRTase-like"/>
</dbReference>
<dbReference type="InterPro" id="IPR034332">
    <property type="entry name" value="Upp_B"/>
</dbReference>
<dbReference type="InterPro" id="IPR050054">
    <property type="entry name" value="UPRTase/APRTase"/>
</dbReference>
<dbReference type="InterPro" id="IPR005765">
    <property type="entry name" value="Ura_phspho_trans"/>
</dbReference>
<dbReference type="NCBIfam" id="NF001097">
    <property type="entry name" value="PRK00129.1"/>
    <property type="match status" value="1"/>
</dbReference>
<dbReference type="NCBIfam" id="TIGR01091">
    <property type="entry name" value="upp"/>
    <property type="match status" value="1"/>
</dbReference>
<dbReference type="PANTHER" id="PTHR32315">
    <property type="entry name" value="ADENINE PHOSPHORIBOSYLTRANSFERASE"/>
    <property type="match status" value="1"/>
</dbReference>
<dbReference type="PANTHER" id="PTHR32315:SF4">
    <property type="entry name" value="URACIL PHOSPHORIBOSYLTRANSFERASE, CHLOROPLASTIC"/>
    <property type="match status" value="1"/>
</dbReference>
<dbReference type="Pfam" id="PF14681">
    <property type="entry name" value="UPRTase"/>
    <property type="match status" value="1"/>
</dbReference>
<dbReference type="SUPFAM" id="SSF53271">
    <property type="entry name" value="PRTase-like"/>
    <property type="match status" value="1"/>
</dbReference>
<evidence type="ECO:0000255" key="1">
    <source>
        <dbReference type="HAMAP-Rule" id="MF_01218"/>
    </source>
</evidence>
<proteinExistence type="inferred from homology"/>
<comment type="function">
    <text evidence="1">Catalyzes the conversion of uracil and 5-phospho-alpha-D-ribose 1-diphosphate (PRPP) to UMP and diphosphate.</text>
</comment>
<comment type="catalytic activity">
    <reaction evidence="1">
        <text>UMP + diphosphate = 5-phospho-alpha-D-ribose 1-diphosphate + uracil</text>
        <dbReference type="Rhea" id="RHEA:13017"/>
        <dbReference type="ChEBI" id="CHEBI:17568"/>
        <dbReference type="ChEBI" id="CHEBI:33019"/>
        <dbReference type="ChEBI" id="CHEBI:57865"/>
        <dbReference type="ChEBI" id="CHEBI:58017"/>
        <dbReference type="EC" id="2.4.2.9"/>
    </reaction>
</comment>
<comment type="cofactor">
    <cofactor evidence="1">
        <name>Mg(2+)</name>
        <dbReference type="ChEBI" id="CHEBI:18420"/>
    </cofactor>
    <text evidence="1">Binds 1 Mg(2+) ion per subunit. The magnesium is bound as Mg-PRPP.</text>
</comment>
<comment type="activity regulation">
    <text evidence="1">Allosterically activated by GTP.</text>
</comment>
<comment type="pathway">
    <text evidence="1">Pyrimidine metabolism; UMP biosynthesis via salvage pathway; UMP from uracil: step 1/1.</text>
</comment>
<comment type="similarity">
    <text evidence="1">Belongs to the UPRTase family.</text>
</comment>
<accession>Q8YVB5</accession>
<gene>
    <name evidence="1" type="primary">upp</name>
    <name type="ordered locus">all2063</name>
</gene>
<feature type="chain" id="PRO_0000120791" description="Uracil phosphoribosyltransferase">
    <location>
        <begin position="1"/>
        <end position="216"/>
    </location>
</feature>
<feature type="binding site" evidence="1">
    <location>
        <position position="84"/>
    </location>
    <ligand>
        <name>5-phospho-alpha-D-ribose 1-diphosphate</name>
        <dbReference type="ChEBI" id="CHEBI:58017"/>
    </ligand>
</feature>
<feature type="binding site" evidence="1">
    <location>
        <position position="109"/>
    </location>
    <ligand>
        <name>5-phospho-alpha-D-ribose 1-diphosphate</name>
        <dbReference type="ChEBI" id="CHEBI:58017"/>
    </ligand>
</feature>
<feature type="binding site" evidence="1">
    <location>
        <begin position="137"/>
        <end position="145"/>
    </location>
    <ligand>
        <name>5-phospho-alpha-D-ribose 1-diphosphate</name>
        <dbReference type="ChEBI" id="CHEBI:58017"/>
    </ligand>
</feature>
<feature type="binding site" evidence="1">
    <location>
        <position position="202"/>
    </location>
    <ligand>
        <name>uracil</name>
        <dbReference type="ChEBI" id="CHEBI:17568"/>
    </ligand>
</feature>
<feature type="binding site" evidence="1">
    <location>
        <begin position="207"/>
        <end position="209"/>
    </location>
    <ligand>
        <name>uracil</name>
        <dbReference type="ChEBI" id="CHEBI:17568"/>
    </ligand>
</feature>
<feature type="binding site" evidence="1">
    <location>
        <position position="208"/>
    </location>
    <ligand>
        <name>5-phospho-alpha-D-ribose 1-diphosphate</name>
        <dbReference type="ChEBI" id="CHEBI:58017"/>
    </ligand>
</feature>